<comment type="function">
    <text evidence="1">Can catalyze the hydrolysis of ATP in the presence of single-stranded DNA, the ATP-dependent uptake of single-stranded DNA by duplex DNA, and the ATP-dependent hybridization of homologous single-stranded DNAs. It interacts with LexA causing its activation and leading to its autocatalytic cleavage.</text>
</comment>
<comment type="subcellular location">
    <subcellularLocation>
        <location evidence="1">Cytoplasm</location>
    </subcellularLocation>
</comment>
<comment type="similarity">
    <text evidence="1">Belongs to the RecA family.</text>
</comment>
<dbReference type="EMBL" id="CP000359">
    <property type="protein sequence ID" value="ABF46432.1"/>
    <property type="molecule type" value="Genomic_DNA"/>
</dbReference>
<dbReference type="RefSeq" id="WP_011531257.1">
    <property type="nucleotide sequence ID" value="NC_008025.1"/>
</dbReference>
<dbReference type="SMR" id="Q1IWF2"/>
<dbReference type="STRING" id="319795.Dgeo_2138"/>
<dbReference type="KEGG" id="dge:Dgeo_2138"/>
<dbReference type="eggNOG" id="COG0468">
    <property type="taxonomic scope" value="Bacteria"/>
</dbReference>
<dbReference type="HOGENOM" id="CLU_040469_3_2_0"/>
<dbReference type="Proteomes" id="UP000002431">
    <property type="component" value="Chromosome"/>
</dbReference>
<dbReference type="GO" id="GO:0005829">
    <property type="term" value="C:cytosol"/>
    <property type="evidence" value="ECO:0007669"/>
    <property type="project" value="TreeGrafter"/>
</dbReference>
<dbReference type="GO" id="GO:0005524">
    <property type="term" value="F:ATP binding"/>
    <property type="evidence" value="ECO:0007669"/>
    <property type="project" value="UniProtKB-UniRule"/>
</dbReference>
<dbReference type="GO" id="GO:0016887">
    <property type="term" value="F:ATP hydrolysis activity"/>
    <property type="evidence" value="ECO:0007669"/>
    <property type="project" value="InterPro"/>
</dbReference>
<dbReference type="GO" id="GO:0140664">
    <property type="term" value="F:ATP-dependent DNA damage sensor activity"/>
    <property type="evidence" value="ECO:0007669"/>
    <property type="project" value="InterPro"/>
</dbReference>
<dbReference type="GO" id="GO:0003684">
    <property type="term" value="F:damaged DNA binding"/>
    <property type="evidence" value="ECO:0007669"/>
    <property type="project" value="UniProtKB-UniRule"/>
</dbReference>
<dbReference type="GO" id="GO:0003697">
    <property type="term" value="F:single-stranded DNA binding"/>
    <property type="evidence" value="ECO:0007669"/>
    <property type="project" value="UniProtKB-UniRule"/>
</dbReference>
<dbReference type="GO" id="GO:0017116">
    <property type="term" value="F:single-stranded DNA helicase activity"/>
    <property type="evidence" value="ECO:0000314"/>
    <property type="project" value="CACAO"/>
</dbReference>
<dbReference type="GO" id="GO:0006310">
    <property type="term" value="P:DNA recombination"/>
    <property type="evidence" value="ECO:0007669"/>
    <property type="project" value="UniProtKB-UniRule"/>
</dbReference>
<dbReference type="GO" id="GO:0006281">
    <property type="term" value="P:DNA repair"/>
    <property type="evidence" value="ECO:0007669"/>
    <property type="project" value="UniProtKB-UniRule"/>
</dbReference>
<dbReference type="GO" id="GO:0009432">
    <property type="term" value="P:SOS response"/>
    <property type="evidence" value="ECO:0007669"/>
    <property type="project" value="UniProtKB-UniRule"/>
</dbReference>
<dbReference type="CDD" id="cd00983">
    <property type="entry name" value="RecA"/>
    <property type="match status" value="1"/>
</dbReference>
<dbReference type="FunFam" id="3.40.50.300:FF:000087">
    <property type="entry name" value="Recombinase RecA"/>
    <property type="match status" value="1"/>
</dbReference>
<dbReference type="Gene3D" id="3.40.50.300">
    <property type="entry name" value="P-loop containing nucleotide triphosphate hydrolases"/>
    <property type="match status" value="1"/>
</dbReference>
<dbReference type="HAMAP" id="MF_00268">
    <property type="entry name" value="RecA"/>
    <property type="match status" value="1"/>
</dbReference>
<dbReference type="InterPro" id="IPR003593">
    <property type="entry name" value="AAA+_ATPase"/>
</dbReference>
<dbReference type="InterPro" id="IPR013765">
    <property type="entry name" value="DNA_recomb/repair_RecA"/>
</dbReference>
<dbReference type="InterPro" id="IPR020584">
    <property type="entry name" value="DNA_recomb/repair_RecA_CS"/>
</dbReference>
<dbReference type="InterPro" id="IPR027417">
    <property type="entry name" value="P-loop_NTPase"/>
</dbReference>
<dbReference type="InterPro" id="IPR049261">
    <property type="entry name" value="RecA-like_C"/>
</dbReference>
<dbReference type="InterPro" id="IPR049428">
    <property type="entry name" value="RecA-like_N"/>
</dbReference>
<dbReference type="InterPro" id="IPR020588">
    <property type="entry name" value="RecA_ATP-bd"/>
</dbReference>
<dbReference type="InterPro" id="IPR023400">
    <property type="entry name" value="RecA_C_sf"/>
</dbReference>
<dbReference type="InterPro" id="IPR020587">
    <property type="entry name" value="RecA_monomer-monomer_interface"/>
</dbReference>
<dbReference type="NCBIfam" id="TIGR02012">
    <property type="entry name" value="tigrfam_recA"/>
    <property type="match status" value="1"/>
</dbReference>
<dbReference type="PANTHER" id="PTHR45900:SF1">
    <property type="entry name" value="MITOCHONDRIAL DNA REPAIR PROTEIN RECA HOMOLOG-RELATED"/>
    <property type="match status" value="1"/>
</dbReference>
<dbReference type="PANTHER" id="PTHR45900">
    <property type="entry name" value="RECA"/>
    <property type="match status" value="1"/>
</dbReference>
<dbReference type="Pfam" id="PF00154">
    <property type="entry name" value="RecA"/>
    <property type="match status" value="1"/>
</dbReference>
<dbReference type="Pfam" id="PF21096">
    <property type="entry name" value="RecA_C"/>
    <property type="match status" value="1"/>
</dbReference>
<dbReference type="PRINTS" id="PR00142">
    <property type="entry name" value="RECA"/>
</dbReference>
<dbReference type="SMART" id="SM00382">
    <property type="entry name" value="AAA"/>
    <property type="match status" value="1"/>
</dbReference>
<dbReference type="SUPFAM" id="SSF52540">
    <property type="entry name" value="P-loop containing nucleoside triphosphate hydrolases"/>
    <property type="match status" value="1"/>
</dbReference>
<dbReference type="SUPFAM" id="SSF54752">
    <property type="entry name" value="RecA protein, C-terminal domain"/>
    <property type="match status" value="1"/>
</dbReference>
<dbReference type="PROSITE" id="PS00321">
    <property type="entry name" value="RECA_1"/>
    <property type="match status" value="1"/>
</dbReference>
<dbReference type="PROSITE" id="PS50162">
    <property type="entry name" value="RECA_2"/>
    <property type="match status" value="1"/>
</dbReference>
<dbReference type="PROSITE" id="PS50163">
    <property type="entry name" value="RECA_3"/>
    <property type="match status" value="1"/>
</dbReference>
<sequence length="358" mass="38157">MSKDNPKDFGTPSDSKERLKAIETAMTQIEKAFGKGSIMRLGAESKLDVQAVSTGSLSLDLALGVGGIPRGRITEIYGPESGGKTTLALSVIAQAQRAGGTCAFIDAEHALDPVYARSLGVNTDELLVSQPDNGEQALEIMELLVRSGAIDVVVVDSVAALTPRAEIEGEMGDSLPGLQARLMSQALRKLTAILSKTGTAAIFINQVREKIGVMYGNPETTTGGRALKFYASVRLDVRKIGQPVKLGNDAVGNTVKVKTVKNKVAPPFKEVELTLLYGKGFDQLSDLVTLAADMDIIKKAGSFYSYGEERIGQGKEKAIAYIAERPELEQEIRDRVLAAIKEGRDPIAAVPETPALAE</sequence>
<keyword id="KW-0067">ATP-binding</keyword>
<keyword id="KW-0963">Cytoplasm</keyword>
<keyword id="KW-0227">DNA damage</keyword>
<keyword id="KW-0233">DNA recombination</keyword>
<keyword id="KW-0234">DNA repair</keyword>
<keyword id="KW-0238">DNA-binding</keyword>
<keyword id="KW-0547">Nucleotide-binding</keyword>
<keyword id="KW-0742">SOS response</keyword>
<proteinExistence type="inferred from homology"/>
<gene>
    <name evidence="1" type="primary">recA</name>
    <name type="ordered locus">Dgeo_2138</name>
</gene>
<feature type="chain" id="PRO_1000047909" description="Protein RecA">
    <location>
        <begin position="1"/>
        <end position="358"/>
    </location>
</feature>
<feature type="binding site" evidence="1">
    <location>
        <begin position="78"/>
        <end position="85"/>
    </location>
    <ligand>
        <name>ATP</name>
        <dbReference type="ChEBI" id="CHEBI:30616"/>
    </ligand>
</feature>
<reference key="1">
    <citation type="submission" date="2006-04" db="EMBL/GenBank/DDBJ databases">
        <title>Complete sequence of chromosome of Deinococcus geothermalis DSM 11300.</title>
        <authorList>
            <person name="Copeland A."/>
            <person name="Lucas S."/>
            <person name="Lapidus A."/>
            <person name="Barry K."/>
            <person name="Detter J.C."/>
            <person name="Glavina del Rio T."/>
            <person name="Hammon N."/>
            <person name="Israni S."/>
            <person name="Dalin E."/>
            <person name="Tice H."/>
            <person name="Pitluck S."/>
            <person name="Brettin T."/>
            <person name="Bruce D."/>
            <person name="Han C."/>
            <person name="Tapia R."/>
            <person name="Saunders E."/>
            <person name="Gilna P."/>
            <person name="Schmutz J."/>
            <person name="Larimer F."/>
            <person name="Land M."/>
            <person name="Hauser L."/>
            <person name="Kyrpides N."/>
            <person name="Kim E."/>
            <person name="Daly M.J."/>
            <person name="Fredrickson J.K."/>
            <person name="Makarova K.S."/>
            <person name="Gaidamakova E.K."/>
            <person name="Zhai M."/>
            <person name="Richardson P."/>
        </authorList>
    </citation>
    <scope>NUCLEOTIDE SEQUENCE [LARGE SCALE GENOMIC DNA]</scope>
    <source>
        <strain>DSM 11300 / CIP 105573 / AG-3a</strain>
    </source>
</reference>
<accession>Q1IWF2</accession>
<evidence type="ECO:0000255" key="1">
    <source>
        <dbReference type="HAMAP-Rule" id="MF_00268"/>
    </source>
</evidence>
<organism>
    <name type="scientific">Deinococcus geothermalis (strain DSM 11300 / CIP 105573 / AG-3a)</name>
    <dbReference type="NCBI Taxonomy" id="319795"/>
    <lineage>
        <taxon>Bacteria</taxon>
        <taxon>Thermotogati</taxon>
        <taxon>Deinococcota</taxon>
        <taxon>Deinococci</taxon>
        <taxon>Deinococcales</taxon>
        <taxon>Deinococcaceae</taxon>
        <taxon>Deinococcus</taxon>
    </lineage>
</organism>
<protein>
    <recommendedName>
        <fullName evidence="1">Protein RecA</fullName>
    </recommendedName>
    <alternativeName>
        <fullName evidence="1">Recombinase A</fullName>
    </alternativeName>
</protein>
<name>RECA_DEIGD</name>